<accession>A5DF03</accession>
<feature type="chain" id="PRO_0000294636" description="Pre-mRNA-splicing ATP-dependent RNA helicase PRP28">
    <location>
        <begin position="1"/>
        <end position="575"/>
    </location>
</feature>
<feature type="domain" description="Helicase ATP-binding" evidence="2">
    <location>
        <begin position="181"/>
        <end position="381"/>
    </location>
</feature>
<feature type="domain" description="Helicase C-terminal" evidence="3">
    <location>
        <begin position="421"/>
        <end position="566"/>
    </location>
</feature>
<feature type="region of interest" description="Disordered" evidence="4">
    <location>
        <begin position="1"/>
        <end position="101"/>
    </location>
</feature>
<feature type="short sequence motif" description="Q motif">
    <location>
        <begin position="150"/>
        <end position="178"/>
    </location>
</feature>
<feature type="short sequence motif" description="DEAD box">
    <location>
        <begin position="313"/>
        <end position="316"/>
    </location>
</feature>
<feature type="compositionally biased region" description="Basic and acidic residues" evidence="4">
    <location>
        <begin position="10"/>
        <end position="19"/>
    </location>
</feature>
<feature type="compositionally biased region" description="Basic and acidic residues" evidence="4">
    <location>
        <begin position="31"/>
        <end position="49"/>
    </location>
</feature>
<feature type="binding site" evidence="2">
    <location>
        <begin position="194"/>
        <end position="201"/>
    </location>
    <ligand>
        <name>ATP</name>
        <dbReference type="ChEBI" id="CHEBI:30616"/>
    </ligand>
</feature>
<gene>
    <name type="primary">PRP28</name>
    <name type="ORF">PGUG_01854</name>
</gene>
<protein>
    <recommendedName>
        <fullName>Pre-mRNA-splicing ATP-dependent RNA helicase PRP28</fullName>
        <ecNumber>3.6.4.13</ecNumber>
    </recommendedName>
</protein>
<reference key="1">
    <citation type="journal article" date="2009" name="Nature">
        <title>Evolution of pathogenicity and sexual reproduction in eight Candida genomes.</title>
        <authorList>
            <person name="Butler G."/>
            <person name="Rasmussen M.D."/>
            <person name="Lin M.F."/>
            <person name="Santos M.A.S."/>
            <person name="Sakthikumar S."/>
            <person name="Munro C.A."/>
            <person name="Rheinbay E."/>
            <person name="Grabherr M."/>
            <person name="Forche A."/>
            <person name="Reedy J.L."/>
            <person name="Agrafioti I."/>
            <person name="Arnaud M.B."/>
            <person name="Bates S."/>
            <person name="Brown A.J.P."/>
            <person name="Brunke S."/>
            <person name="Costanzo M.C."/>
            <person name="Fitzpatrick D.A."/>
            <person name="de Groot P.W.J."/>
            <person name="Harris D."/>
            <person name="Hoyer L.L."/>
            <person name="Hube B."/>
            <person name="Klis F.M."/>
            <person name="Kodira C."/>
            <person name="Lennard N."/>
            <person name="Logue M.E."/>
            <person name="Martin R."/>
            <person name="Neiman A.M."/>
            <person name="Nikolaou E."/>
            <person name="Quail M.A."/>
            <person name="Quinn J."/>
            <person name="Santos M.C."/>
            <person name="Schmitzberger F.F."/>
            <person name="Sherlock G."/>
            <person name="Shah P."/>
            <person name="Silverstein K.A.T."/>
            <person name="Skrzypek M.S."/>
            <person name="Soll D."/>
            <person name="Staggs R."/>
            <person name="Stansfield I."/>
            <person name="Stumpf M.P.H."/>
            <person name="Sudbery P.E."/>
            <person name="Srikantha T."/>
            <person name="Zeng Q."/>
            <person name="Berman J."/>
            <person name="Berriman M."/>
            <person name="Heitman J."/>
            <person name="Gow N.A.R."/>
            <person name="Lorenz M.C."/>
            <person name="Birren B.W."/>
            <person name="Kellis M."/>
            <person name="Cuomo C.A."/>
        </authorList>
    </citation>
    <scope>NUCLEOTIDE SEQUENCE [LARGE SCALE GENOMIC DNA]</scope>
    <source>
        <strain>ATCC 6260 / CBS 566 / DSM 6381 / JCM 1539 / NBRC 10279 / NRRL Y-324</strain>
    </source>
</reference>
<proteinExistence type="inferred from homology"/>
<keyword id="KW-0067">ATP-binding</keyword>
<keyword id="KW-0963">Cytoplasm</keyword>
<keyword id="KW-0347">Helicase</keyword>
<keyword id="KW-0378">Hydrolase</keyword>
<keyword id="KW-0507">mRNA processing</keyword>
<keyword id="KW-0508">mRNA splicing</keyword>
<keyword id="KW-0547">Nucleotide-binding</keyword>
<keyword id="KW-0539">Nucleus</keyword>
<keyword id="KW-1185">Reference proteome</keyword>
<organism>
    <name type="scientific">Meyerozyma guilliermondii (strain ATCC 6260 / CBS 566 / DSM 6381 / JCM 1539 / NBRC 10279 / NRRL Y-324)</name>
    <name type="common">Yeast</name>
    <name type="synonym">Candida guilliermondii</name>
    <dbReference type="NCBI Taxonomy" id="294746"/>
    <lineage>
        <taxon>Eukaryota</taxon>
        <taxon>Fungi</taxon>
        <taxon>Dikarya</taxon>
        <taxon>Ascomycota</taxon>
        <taxon>Saccharomycotina</taxon>
        <taxon>Pichiomycetes</taxon>
        <taxon>Debaryomycetaceae</taxon>
        <taxon>Meyerozyma</taxon>
    </lineage>
</organism>
<comment type="function">
    <text evidence="1">ATP-dependent RNA helicase involved in mRNA splicing. May destabilize the U1/5'-splice site duplex to permit an effective competition for the 5'-splice site by the U6 snRNA, resulting in the switch between U1 and U6 at the 5'-splice site. May also act to unwind the U4/U6 base-pairing interaction in the U4/U6/U5 snRNP, facilitating the first covalent step of splicing (By similarity).</text>
</comment>
<comment type="catalytic activity">
    <reaction>
        <text>ATP + H2O = ADP + phosphate + H(+)</text>
        <dbReference type="Rhea" id="RHEA:13065"/>
        <dbReference type="ChEBI" id="CHEBI:15377"/>
        <dbReference type="ChEBI" id="CHEBI:15378"/>
        <dbReference type="ChEBI" id="CHEBI:30616"/>
        <dbReference type="ChEBI" id="CHEBI:43474"/>
        <dbReference type="ChEBI" id="CHEBI:456216"/>
        <dbReference type="EC" id="3.6.4.13"/>
    </reaction>
</comment>
<comment type="subunit">
    <text evidence="1">Component of the U5 snRNP complex.</text>
</comment>
<comment type="subcellular location">
    <subcellularLocation>
        <location evidence="1">Cytoplasm</location>
    </subcellularLocation>
    <subcellularLocation>
        <location evidence="1">Nucleus</location>
    </subcellularLocation>
</comment>
<comment type="domain">
    <text>The Q motif is unique to and characteristic of the DEAD box family of RNA helicases and controls ATP binding and hydrolysis.</text>
</comment>
<comment type="similarity">
    <text evidence="5">Belongs to the DEAD box helicase family. DDX23/PRP28 subfamily.</text>
</comment>
<evidence type="ECO:0000250" key="1"/>
<evidence type="ECO:0000255" key="2">
    <source>
        <dbReference type="PROSITE-ProRule" id="PRU00541"/>
    </source>
</evidence>
<evidence type="ECO:0000255" key="3">
    <source>
        <dbReference type="PROSITE-ProRule" id="PRU00542"/>
    </source>
</evidence>
<evidence type="ECO:0000256" key="4">
    <source>
        <dbReference type="SAM" id="MobiDB-lite"/>
    </source>
</evidence>
<evidence type="ECO:0000305" key="5"/>
<name>PRP28_PICGU</name>
<dbReference type="EC" id="3.6.4.13"/>
<dbReference type="EMBL" id="CH408156">
    <property type="protein sequence ID" value="EDK37756.2"/>
    <property type="molecule type" value="Genomic_DNA"/>
</dbReference>
<dbReference type="RefSeq" id="XP_001486183.1">
    <property type="nucleotide sequence ID" value="XM_001486133.1"/>
</dbReference>
<dbReference type="SMR" id="A5DF03"/>
<dbReference type="FunCoup" id="A5DF03">
    <property type="interactions" value="908"/>
</dbReference>
<dbReference type="STRING" id="294746.A5DF03"/>
<dbReference type="GeneID" id="5128173"/>
<dbReference type="KEGG" id="pgu:PGUG_01854"/>
<dbReference type="VEuPathDB" id="FungiDB:PGUG_01854"/>
<dbReference type="eggNOG" id="KOG0333">
    <property type="taxonomic scope" value="Eukaryota"/>
</dbReference>
<dbReference type="HOGENOM" id="CLU_003041_11_4_1"/>
<dbReference type="InParanoid" id="A5DF03"/>
<dbReference type="OMA" id="IFINYKR"/>
<dbReference type="OrthoDB" id="196131at2759"/>
<dbReference type="Proteomes" id="UP000001997">
    <property type="component" value="Unassembled WGS sequence"/>
</dbReference>
<dbReference type="GO" id="GO:0005737">
    <property type="term" value="C:cytoplasm"/>
    <property type="evidence" value="ECO:0007669"/>
    <property type="project" value="UniProtKB-SubCell"/>
</dbReference>
<dbReference type="GO" id="GO:0005634">
    <property type="term" value="C:nucleus"/>
    <property type="evidence" value="ECO:0007669"/>
    <property type="project" value="UniProtKB-SubCell"/>
</dbReference>
<dbReference type="GO" id="GO:0005524">
    <property type="term" value="F:ATP binding"/>
    <property type="evidence" value="ECO:0007669"/>
    <property type="project" value="UniProtKB-KW"/>
</dbReference>
<dbReference type="GO" id="GO:0016887">
    <property type="term" value="F:ATP hydrolysis activity"/>
    <property type="evidence" value="ECO:0007669"/>
    <property type="project" value="RHEA"/>
</dbReference>
<dbReference type="GO" id="GO:0003676">
    <property type="term" value="F:nucleic acid binding"/>
    <property type="evidence" value="ECO:0007669"/>
    <property type="project" value="InterPro"/>
</dbReference>
<dbReference type="GO" id="GO:0003724">
    <property type="term" value="F:RNA helicase activity"/>
    <property type="evidence" value="ECO:0007669"/>
    <property type="project" value="UniProtKB-EC"/>
</dbReference>
<dbReference type="GO" id="GO:0006397">
    <property type="term" value="P:mRNA processing"/>
    <property type="evidence" value="ECO:0007669"/>
    <property type="project" value="UniProtKB-KW"/>
</dbReference>
<dbReference type="GO" id="GO:0008380">
    <property type="term" value="P:RNA splicing"/>
    <property type="evidence" value="ECO:0007669"/>
    <property type="project" value="UniProtKB-KW"/>
</dbReference>
<dbReference type="CDD" id="cd18787">
    <property type="entry name" value="SF2_C_DEAD"/>
    <property type="match status" value="1"/>
</dbReference>
<dbReference type="Gene3D" id="3.40.50.300">
    <property type="entry name" value="P-loop containing nucleotide triphosphate hydrolases"/>
    <property type="match status" value="2"/>
</dbReference>
<dbReference type="InterPro" id="IPR011545">
    <property type="entry name" value="DEAD/DEAH_box_helicase_dom"/>
</dbReference>
<dbReference type="InterPro" id="IPR014001">
    <property type="entry name" value="Helicase_ATP-bd"/>
</dbReference>
<dbReference type="InterPro" id="IPR001650">
    <property type="entry name" value="Helicase_C-like"/>
</dbReference>
<dbReference type="InterPro" id="IPR027417">
    <property type="entry name" value="P-loop_NTPase"/>
</dbReference>
<dbReference type="InterPro" id="IPR014014">
    <property type="entry name" value="RNA_helicase_DEAD_Q_motif"/>
</dbReference>
<dbReference type="PANTHER" id="PTHR47958">
    <property type="entry name" value="ATP-DEPENDENT RNA HELICASE DBP3"/>
    <property type="match status" value="1"/>
</dbReference>
<dbReference type="Pfam" id="PF00270">
    <property type="entry name" value="DEAD"/>
    <property type="match status" value="1"/>
</dbReference>
<dbReference type="Pfam" id="PF00271">
    <property type="entry name" value="Helicase_C"/>
    <property type="match status" value="1"/>
</dbReference>
<dbReference type="SMART" id="SM00487">
    <property type="entry name" value="DEXDc"/>
    <property type="match status" value="1"/>
</dbReference>
<dbReference type="SMART" id="SM00490">
    <property type="entry name" value="HELICc"/>
    <property type="match status" value="1"/>
</dbReference>
<dbReference type="SUPFAM" id="SSF52540">
    <property type="entry name" value="P-loop containing nucleoside triphosphate hydrolases"/>
    <property type="match status" value="1"/>
</dbReference>
<dbReference type="PROSITE" id="PS51192">
    <property type="entry name" value="HELICASE_ATP_BIND_1"/>
    <property type="match status" value="1"/>
</dbReference>
<dbReference type="PROSITE" id="PS51194">
    <property type="entry name" value="HELICASE_CTER"/>
    <property type="match status" value="1"/>
</dbReference>
<dbReference type="PROSITE" id="PS51195">
    <property type="entry name" value="Q_MOTIF"/>
    <property type="match status" value="1"/>
</dbReference>
<sequence length="575" mass="64693">MRPLNAAELLKSRSQDHKLAKPQFLSKKKRLELQRAKEDEEREKTELKRKTNTLKRSSPSEPETILDQKDTSTANKKRKKRFNFEWDDEEDTSSQLEPMMAYPTSNNDFLPAEEHWSDKKLEDMTSRDWRIFKEDFSITCKGNNIPNPLRSWKESGIPTTLLNTIDQLGYKEPTPIQRAAIPTALGHRDVVGIAETGSGKTLAFLIPLLSYLSAIDKDYMEVEHKQESNLNKVLGLVLAPTRELALQISKEAKKFASVLGYNVVTIIGGHQYEETVKSVQDGAHIVVATPGRLIDSAEKGLIDLSQCYHLTMDEADRMIDMGFEKALQSILSFLPSTSSSGFGLDSTIFKVKSRITLMFTATISPPIEKITKDYLQTPAYLYIGDAGEIVDNINQKFEYLGDNVDSQEELNAPRTNKMISALRQHIRETEQPLIIIFANFKRTCELLSVELSNQNVGSNIVIHGSKSQEARESAIASFREHKVNVLIATDVAARGIDIPNVSLVVNYHMPKRFDEYIHRIGRTGRAGKSGASLSFVDDGDSEILVNLKSFLSKGTKRLPDWLLRHPAVQSLTLKD</sequence>